<dbReference type="PDB" id="1NRA">
    <property type="method" value="NMR"/>
    <property type="chains" value="A=1-63"/>
</dbReference>
<dbReference type="PDB" id="1NRB">
    <property type="method" value="NMR"/>
    <property type="chains" value="A=1-63"/>
</dbReference>
<dbReference type="PDBsum" id="1NRA"/>
<dbReference type="PDBsum" id="1NRB"/>
<dbReference type="BMRB" id="P46066"/>
<dbReference type="SMR" id="P46066"/>
<dbReference type="EnsemblMetazoa" id="XM_023387153.1">
    <property type="protein sequence ID" value="XP_023242921.1"/>
    <property type="gene ID" value="LOC111641047"/>
</dbReference>
<dbReference type="EvolutionaryTrace" id="P46066"/>
<dbReference type="GO" id="GO:0005576">
    <property type="term" value="C:extracellular region"/>
    <property type="evidence" value="ECO:0007669"/>
    <property type="project" value="UniProtKB-SubCell"/>
</dbReference>
<dbReference type="GO" id="GO:0019871">
    <property type="term" value="F:sodium channel inhibitor activity"/>
    <property type="evidence" value="ECO:0007669"/>
    <property type="project" value="InterPro"/>
</dbReference>
<dbReference type="GO" id="GO:0090729">
    <property type="term" value="F:toxin activity"/>
    <property type="evidence" value="ECO:0007669"/>
    <property type="project" value="UniProtKB-KW"/>
</dbReference>
<dbReference type="GO" id="GO:0006952">
    <property type="term" value="P:defense response"/>
    <property type="evidence" value="ECO:0007669"/>
    <property type="project" value="InterPro"/>
</dbReference>
<dbReference type="CDD" id="cd23106">
    <property type="entry name" value="neurotoxins_LC_scorpion"/>
    <property type="match status" value="1"/>
</dbReference>
<dbReference type="Gene3D" id="3.30.30.10">
    <property type="entry name" value="Knottin, scorpion toxin-like"/>
    <property type="match status" value="1"/>
</dbReference>
<dbReference type="InterPro" id="IPR044062">
    <property type="entry name" value="LCN-type_CS_alpha_beta_dom"/>
</dbReference>
<dbReference type="InterPro" id="IPR003614">
    <property type="entry name" value="Scorpion_toxin-like"/>
</dbReference>
<dbReference type="InterPro" id="IPR036574">
    <property type="entry name" value="Scorpion_toxin-like_sf"/>
</dbReference>
<dbReference type="InterPro" id="IPR018218">
    <property type="entry name" value="Scorpion_toxinL"/>
</dbReference>
<dbReference type="InterPro" id="IPR002061">
    <property type="entry name" value="Scorpion_toxinL/defensin"/>
</dbReference>
<dbReference type="Pfam" id="PF00537">
    <property type="entry name" value="Toxin_3"/>
    <property type="match status" value="1"/>
</dbReference>
<dbReference type="PRINTS" id="PR00285">
    <property type="entry name" value="SCORPNTOXIN"/>
</dbReference>
<dbReference type="SMART" id="SM00505">
    <property type="entry name" value="Knot1"/>
    <property type="match status" value="1"/>
</dbReference>
<dbReference type="SUPFAM" id="SSF57095">
    <property type="entry name" value="Scorpion toxin-like"/>
    <property type="match status" value="1"/>
</dbReference>
<dbReference type="PROSITE" id="PS51863">
    <property type="entry name" value="LCN_CSAB"/>
    <property type="match status" value="1"/>
</dbReference>
<name>SCXV_CENSC</name>
<proteinExistence type="evidence at protein level"/>
<comment type="function">
    <text>Alpha toxins bind voltage-independently at site-3 of sodium channels (Nav) and inhibit the inactivation of the activated channels, thereby blocking neuronal transmission.</text>
</comment>
<comment type="subcellular location">
    <subcellularLocation>
        <location evidence="2">Secreted</location>
    </subcellularLocation>
</comment>
<comment type="tissue specificity">
    <text evidence="6">Expressed by the venom gland.</text>
</comment>
<comment type="domain">
    <text evidence="3">Has the structural arrangement of an alpha-helix connected to antiparallel beta-sheets by disulfide bonds (CS-alpha/beta).</text>
</comment>
<comment type="similarity">
    <text evidence="5">Belongs to the long (4 C-C) scorpion toxin superfamily. Sodium channel inhibitor family. Alpha subfamily.</text>
</comment>
<organism>
    <name type="scientific">Centruroides sculpturatus</name>
    <name type="common">Arizona bark scorpion</name>
    <dbReference type="NCBI Taxonomy" id="218467"/>
    <lineage>
        <taxon>Eukaryota</taxon>
        <taxon>Metazoa</taxon>
        <taxon>Ecdysozoa</taxon>
        <taxon>Arthropoda</taxon>
        <taxon>Chelicerata</taxon>
        <taxon>Arachnida</taxon>
        <taxon>Scorpiones</taxon>
        <taxon>Buthida</taxon>
        <taxon>Buthoidea</taxon>
        <taxon>Buthidae</taxon>
        <taxon>Centruroides</taxon>
    </lineage>
</organism>
<evidence type="ECO:0000255" key="1">
    <source>
        <dbReference type="PROSITE-ProRule" id="PRU01210"/>
    </source>
</evidence>
<evidence type="ECO:0000269" key="2">
    <source>
    </source>
</evidence>
<evidence type="ECO:0000269" key="3">
    <source>
    </source>
</evidence>
<evidence type="ECO:0000303" key="4">
    <source>
    </source>
</evidence>
<evidence type="ECO:0000305" key="5"/>
<evidence type="ECO:0000305" key="6">
    <source>
    </source>
</evidence>
<evidence type="ECO:0000312" key="7">
    <source>
        <dbReference type="PDB" id="1NRA"/>
    </source>
</evidence>
<evidence type="ECO:0000312" key="8">
    <source>
        <dbReference type="PDB" id="1NRB"/>
    </source>
</evidence>
<evidence type="ECO:0007829" key="9">
    <source>
        <dbReference type="PDB" id="1NRA"/>
    </source>
</evidence>
<sequence>KKDGYPVDSGNCKYECLKDDYCNDLCLERKADKGYCYWGKVSCYCYGLPDNSPTKTSGKCNPA</sequence>
<feature type="chain" id="PRO_0000066775" description="Alpha-toxin CsE5" evidence="2">
    <location>
        <begin position="1"/>
        <end position="63"/>
    </location>
</feature>
<feature type="domain" description="LCN-type CS-alpha/beta" evidence="1">
    <location>
        <begin position="2"/>
        <end position="61"/>
    </location>
</feature>
<feature type="disulfide bond" evidence="1 3 7 8">
    <location>
        <begin position="12"/>
        <end position="60"/>
    </location>
</feature>
<feature type="disulfide bond" evidence="1 3 7 8">
    <location>
        <begin position="16"/>
        <end position="36"/>
    </location>
</feature>
<feature type="disulfide bond" evidence="1 3 7 8">
    <location>
        <begin position="22"/>
        <end position="43"/>
    </location>
</feature>
<feature type="disulfide bond" evidence="1 3 7 8">
    <location>
        <begin position="26"/>
        <end position="45"/>
    </location>
</feature>
<feature type="strand" evidence="9">
    <location>
        <begin position="2"/>
        <end position="4"/>
    </location>
</feature>
<feature type="strand" evidence="9">
    <location>
        <begin position="17"/>
        <end position="19"/>
    </location>
</feature>
<feature type="helix" evidence="9">
    <location>
        <begin position="20"/>
        <end position="28"/>
    </location>
</feature>
<feature type="strand" evidence="9">
    <location>
        <begin position="32"/>
        <end position="37"/>
    </location>
</feature>
<feature type="turn" evidence="9">
    <location>
        <begin position="38"/>
        <end position="41"/>
    </location>
</feature>
<feature type="strand" evidence="9">
    <location>
        <begin position="42"/>
        <end position="48"/>
    </location>
</feature>
<accession>P46066</accession>
<protein>
    <recommendedName>
        <fullName>Alpha-toxin CsE5</fullName>
    </recommendedName>
    <alternativeName>
        <fullName>B140-1</fullName>
    </alternativeName>
    <alternativeName>
        <fullName evidence="4">CsE-V</fullName>
        <shortName>CsEV</shortName>
    </alternativeName>
    <alternativeName>
        <fullName>Neurotoxin V</fullName>
    </alternativeName>
</protein>
<keyword id="KW-0002">3D-structure</keyword>
<keyword id="KW-0903">Direct protein sequencing</keyword>
<keyword id="KW-1015">Disulfide bond</keyword>
<keyword id="KW-0872">Ion channel impairing toxin</keyword>
<keyword id="KW-0528">Neurotoxin</keyword>
<keyword id="KW-0964">Secreted</keyword>
<keyword id="KW-0800">Toxin</keyword>
<keyword id="KW-0738">Voltage-gated sodium channel impairing toxin</keyword>
<reference key="1">
    <citation type="journal article" date="1991" name="Toxicon">
        <title>Characterization of cationic binding sites of neurotoxins from venom of the scorpion (Centruroides sculpturatus Ewing) using lanthanides as binding probes.</title>
        <authorList>
            <person name="David R.M."/>
            <person name="Krishna N.R."/>
            <person name="Watt D.D."/>
        </authorList>
    </citation>
    <scope>PROTEIN SEQUENCE</scope>
    <scope>SUBCELLULAR LOCATION</scope>
    <source>
        <tissue>Venom</tissue>
    </source>
</reference>
<reference key="2">
    <citation type="journal article" date="1995" name="J. Mol. Biol.">
        <title>Solution structure of an Old World-like neurotoxin from the venom of the New World scorpion Centruroides sculpturatus Ewing.</title>
        <authorList>
            <person name="Jablonsky M.J."/>
            <person name="Watt D.D."/>
            <person name="Krishna N.R."/>
        </authorList>
    </citation>
    <scope>STRUCTURE BY NMR</scope>
    <scope>DISULFIDE BONDS</scope>
    <source>
        <tissue>Venom</tissue>
    </source>
</reference>